<keyword id="KW-1185">Reference proteome</keyword>
<keyword id="KW-0687">Ribonucleoprotein</keyword>
<keyword id="KW-0689">Ribosomal protein</keyword>
<keyword id="KW-0694">RNA-binding</keyword>
<keyword id="KW-0699">rRNA-binding</keyword>
<feature type="chain" id="PRO_1000054548" description="Large ribosomal subunit protein uL15">
    <location>
        <begin position="1"/>
        <end position="173"/>
    </location>
</feature>
<feature type="region of interest" description="Disordered" evidence="2">
    <location>
        <begin position="1"/>
        <end position="50"/>
    </location>
</feature>
<feature type="compositionally biased region" description="Basic and acidic residues" evidence="2">
    <location>
        <begin position="1"/>
        <end position="11"/>
    </location>
</feature>
<feature type="compositionally biased region" description="Gly residues" evidence="2">
    <location>
        <begin position="21"/>
        <end position="35"/>
    </location>
</feature>
<dbReference type="EMBL" id="CP000699">
    <property type="protein sequence ID" value="ABQ67699.1"/>
    <property type="molecule type" value="Genomic_DNA"/>
</dbReference>
<dbReference type="SMR" id="A5V5Y3"/>
<dbReference type="STRING" id="392499.Swit_1334"/>
<dbReference type="PaxDb" id="392499-Swit_1334"/>
<dbReference type="KEGG" id="swi:Swit_1334"/>
<dbReference type="eggNOG" id="COG0200">
    <property type="taxonomic scope" value="Bacteria"/>
</dbReference>
<dbReference type="HOGENOM" id="CLU_055188_4_0_5"/>
<dbReference type="OrthoDB" id="9810293at2"/>
<dbReference type="Proteomes" id="UP000001989">
    <property type="component" value="Chromosome"/>
</dbReference>
<dbReference type="GO" id="GO:0022625">
    <property type="term" value="C:cytosolic large ribosomal subunit"/>
    <property type="evidence" value="ECO:0007669"/>
    <property type="project" value="TreeGrafter"/>
</dbReference>
<dbReference type="GO" id="GO:0019843">
    <property type="term" value="F:rRNA binding"/>
    <property type="evidence" value="ECO:0007669"/>
    <property type="project" value="UniProtKB-UniRule"/>
</dbReference>
<dbReference type="GO" id="GO:0003735">
    <property type="term" value="F:structural constituent of ribosome"/>
    <property type="evidence" value="ECO:0007669"/>
    <property type="project" value="InterPro"/>
</dbReference>
<dbReference type="GO" id="GO:0006412">
    <property type="term" value="P:translation"/>
    <property type="evidence" value="ECO:0007669"/>
    <property type="project" value="UniProtKB-UniRule"/>
</dbReference>
<dbReference type="Gene3D" id="3.100.10.10">
    <property type="match status" value="1"/>
</dbReference>
<dbReference type="HAMAP" id="MF_01341">
    <property type="entry name" value="Ribosomal_uL15"/>
    <property type="match status" value="1"/>
</dbReference>
<dbReference type="InterPro" id="IPR030878">
    <property type="entry name" value="Ribosomal_uL15"/>
</dbReference>
<dbReference type="InterPro" id="IPR021131">
    <property type="entry name" value="Ribosomal_uL15/eL18"/>
</dbReference>
<dbReference type="InterPro" id="IPR036227">
    <property type="entry name" value="Ribosomal_uL15/eL18_sf"/>
</dbReference>
<dbReference type="InterPro" id="IPR005749">
    <property type="entry name" value="Ribosomal_uL15_bac-type"/>
</dbReference>
<dbReference type="InterPro" id="IPR001196">
    <property type="entry name" value="Ribosomal_uL15_CS"/>
</dbReference>
<dbReference type="NCBIfam" id="TIGR01071">
    <property type="entry name" value="rplO_bact"/>
    <property type="match status" value="1"/>
</dbReference>
<dbReference type="PANTHER" id="PTHR12934">
    <property type="entry name" value="50S RIBOSOMAL PROTEIN L15"/>
    <property type="match status" value="1"/>
</dbReference>
<dbReference type="PANTHER" id="PTHR12934:SF11">
    <property type="entry name" value="LARGE RIBOSOMAL SUBUNIT PROTEIN UL15M"/>
    <property type="match status" value="1"/>
</dbReference>
<dbReference type="Pfam" id="PF00828">
    <property type="entry name" value="Ribosomal_L27A"/>
    <property type="match status" value="1"/>
</dbReference>
<dbReference type="SUPFAM" id="SSF52080">
    <property type="entry name" value="Ribosomal proteins L15p and L18e"/>
    <property type="match status" value="1"/>
</dbReference>
<dbReference type="PROSITE" id="PS00475">
    <property type="entry name" value="RIBOSOMAL_L15"/>
    <property type="match status" value="1"/>
</dbReference>
<comment type="function">
    <text evidence="1">Binds to the 23S rRNA.</text>
</comment>
<comment type="subunit">
    <text evidence="1">Part of the 50S ribosomal subunit.</text>
</comment>
<comment type="similarity">
    <text evidence="1">Belongs to the universal ribosomal protein uL15 family.</text>
</comment>
<gene>
    <name evidence="1" type="primary">rplO</name>
    <name type="ordered locus">Swit_1334</name>
</gene>
<proteinExistence type="inferred from homology"/>
<name>RL15_RHIWR</name>
<organism>
    <name type="scientific">Rhizorhabdus wittichii (strain DSM 6014 / CCUG 31198 / JCM 15750 / NBRC 105917 / EY 4224 / RW1)</name>
    <name type="common">Sphingomonas wittichii</name>
    <dbReference type="NCBI Taxonomy" id="392499"/>
    <lineage>
        <taxon>Bacteria</taxon>
        <taxon>Pseudomonadati</taxon>
        <taxon>Pseudomonadota</taxon>
        <taxon>Alphaproteobacteria</taxon>
        <taxon>Sphingomonadales</taxon>
        <taxon>Sphingomonadaceae</taxon>
        <taxon>Rhizorhabdus</taxon>
    </lineage>
</organism>
<accession>A5V5Y3</accession>
<reference key="1">
    <citation type="journal article" date="2010" name="J. Bacteriol.">
        <title>Genome sequence of the dioxin-mineralizing bacterium Sphingomonas wittichii RW1.</title>
        <authorList>
            <person name="Miller T.R."/>
            <person name="Delcher A.L."/>
            <person name="Salzberg S.L."/>
            <person name="Saunders E."/>
            <person name="Detter J.C."/>
            <person name="Halden R.U."/>
        </authorList>
    </citation>
    <scope>NUCLEOTIDE SEQUENCE [LARGE SCALE GENOMIC DNA]</scope>
    <source>
        <strain>DSM 6014 / CCUG 31198 / JCM 15750 / NBRC 105917 / EY 4224 / RW1</strain>
    </source>
</reference>
<protein>
    <recommendedName>
        <fullName evidence="1">Large ribosomal subunit protein uL15</fullName>
    </recommendedName>
    <alternativeName>
        <fullName evidence="3">50S ribosomal protein L15</fullName>
    </alternativeName>
</protein>
<sequence>MKLNEIRDNQGARKSRVRVGRGIGSGLGKTGGRGQKGQKSRSGVSINGFEGGQMPLHMRLPKRGFNNIFAKDYAEVNLGAIQKLVDAKKLDTAGVIDHAALKAAGVARGGKDGVRILGKGELTAKVSFKVAGVSAGAKAAIEKAGGSVEVIEVVPAAEKAAAKKGTAKAAKKA</sequence>
<evidence type="ECO:0000255" key="1">
    <source>
        <dbReference type="HAMAP-Rule" id="MF_01341"/>
    </source>
</evidence>
<evidence type="ECO:0000256" key="2">
    <source>
        <dbReference type="SAM" id="MobiDB-lite"/>
    </source>
</evidence>
<evidence type="ECO:0000305" key="3"/>